<accession>Q9CQR2</accession>
<accession>Q5M9L3</accession>
<proteinExistence type="evidence at protein level"/>
<name>RS21_MOUSE</name>
<evidence type="ECO:0000250" key="1">
    <source>
        <dbReference type="UniProtKB" id="P63220"/>
    </source>
</evidence>
<evidence type="ECO:0000250" key="2">
    <source>
        <dbReference type="UniProtKB" id="P63221"/>
    </source>
</evidence>
<evidence type="ECO:0000269" key="3">
    <source>
    </source>
</evidence>
<evidence type="ECO:0000305" key="4"/>
<evidence type="ECO:0007744" key="5">
    <source>
        <dbReference type="PDB" id="7CPU"/>
    </source>
</evidence>
<evidence type="ECO:0007744" key="6">
    <source>
        <dbReference type="PDB" id="7CPV"/>
    </source>
</evidence>
<organism>
    <name type="scientific">Mus musculus</name>
    <name type="common">Mouse</name>
    <dbReference type="NCBI Taxonomy" id="10090"/>
    <lineage>
        <taxon>Eukaryota</taxon>
        <taxon>Metazoa</taxon>
        <taxon>Chordata</taxon>
        <taxon>Craniata</taxon>
        <taxon>Vertebrata</taxon>
        <taxon>Euteleostomi</taxon>
        <taxon>Mammalia</taxon>
        <taxon>Eutheria</taxon>
        <taxon>Euarchontoglires</taxon>
        <taxon>Glires</taxon>
        <taxon>Rodentia</taxon>
        <taxon>Myomorpha</taxon>
        <taxon>Muroidea</taxon>
        <taxon>Muridae</taxon>
        <taxon>Murinae</taxon>
        <taxon>Mus</taxon>
        <taxon>Mus</taxon>
    </lineage>
</organism>
<sequence length="83" mass="9141">MQNDAGEFVDLYVPRKCSASNRIIAAKDHASIQMNVAEVDRTTGRFNGQFKTYGICGAIRRMGESDDSILRLAKADGIVSKNF</sequence>
<reference key="1">
    <citation type="journal article" date="2005" name="Science">
        <title>The transcriptional landscape of the mammalian genome.</title>
        <authorList>
            <person name="Carninci P."/>
            <person name="Kasukawa T."/>
            <person name="Katayama S."/>
            <person name="Gough J."/>
            <person name="Frith M.C."/>
            <person name="Maeda N."/>
            <person name="Oyama R."/>
            <person name="Ravasi T."/>
            <person name="Lenhard B."/>
            <person name="Wells C."/>
            <person name="Kodzius R."/>
            <person name="Shimokawa K."/>
            <person name="Bajic V.B."/>
            <person name="Brenner S.E."/>
            <person name="Batalov S."/>
            <person name="Forrest A.R."/>
            <person name="Zavolan M."/>
            <person name="Davis M.J."/>
            <person name="Wilming L.G."/>
            <person name="Aidinis V."/>
            <person name="Allen J.E."/>
            <person name="Ambesi-Impiombato A."/>
            <person name="Apweiler R."/>
            <person name="Aturaliya R.N."/>
            <person name="Bailey T.L."/>
            <person name="Bansal M."/>
            <person name="Baxter L."/>
            <person name="Beisel K.W."/>
            <person name="Bersano T."/>
            <person name="Bono H."/>
            <person name="Chalk A.M."/>
            <person name="Chiu K.P."/>
            <person name="Choudhary V."/>
            <person name="Christoffels A."/>
            <person name="Clutterbuck D.R."/>
            <person name="Crowe M.L."/>
            <person name="Dalla E."/>
            <person name="Dalrymple B.P."/>
            <person name="de Bono B."/>
            <person name="Della Gatta G."/>
            <person name="di Bernardo D."/>
            <person name="Down T."/>
            <person name="Engstrom P."/>
            <person name="Fagiolini M."/>
            <person name="Faulkner G."/>
            <person name="Fletcher C.F."/>
            <person name="Fukushima T."/>
            <person name="Furuno M."/>
            <person name="Futaki S."/>
            <person name="Gariboldi M."/>
            <person name="Georgii-Hemming P."/>
            <person name="Gingeras T.R."/>
            <person name="Gojobori T."/>
            <person name="Green R.E."/>
            <person name="Gustincich S."/>
            <person name="Harbers M."/>
            <person name="Hayashi Y."/>
            <person name="Hensch T.K."/>
            <person name="Hirokawa N."/>
            <person name="Hill D."/>
            <person name="Huminiecki L."/>
            <person name="Iacono M."/>
            <person name="Ikeo K."/>
            <person name="Iwama A."/>
            <person name="Ishikawa T."/>
            <person name="Jakt M."/>
            <person name="Kanapin A."/>
            <person name="Katoh M."/>
            <person name="Kawasawa Y."/>
            <person name="Kelso J."/>
            <person name="Kitamura H."/>
            <person name="Kitano H."/>
            <person name="Kollias G."/>
            <person name="Krishnan S.P."/>
            <person name="Kruger A."/>
            <person name="Kummerfeld S.K."/>
            <person name="Kurochkin I.V."/>
            <person name="Lareau L.F."/>
            <person name="Lazarevic D."/>
            <person name="Lipovich L."/>
            <person name="Liu J."/>
            <person name="Liuni S."/>
            <person name="McWilliam S."/>
            <person name="Madan Babu M."/>
            <person name="Madera M."/>
            <person name="Marchionni L."/>
            <person name="Matsuda H."/>
            <person name="Matsuzawa S."/>
            <person name="Miki H."/>
            <person name="Mignone F."/>
            <person name="Miyake S."/>
            <person name="Morris K."/>
            <person name="Mottagui-Tabar S."/>
            <person name="Mulder N."/>
            <person name="Nakano N."/>
            <person name="Nakauchi H."/>
            <person name="Ng P."/>
            <person name="Nilsson R."/>
            <person name="Nishiguchi S."/>
            <person name="Nishikawa S."/>
            <person name="Nori F."/>
            <person name="Ohara O."/>
            <person name="Okazaki Y."/>
            <person name="Orlando V."/>
            <person name="Pang K.C."/>
            <person name="Pavan W.J."/>
            <person name="Pavesi G."/>
            <person name="Pesole G."/>
            <person name="Petrovsky N."/>
            <person name="Piazza S."/>
            <person name="Reed J."/>
            <person name="Reid J.F."/>
            <person name="Ring B.Z."/>
            <person name="Ringwald M."/>
            <person name="Rost B."/>
            <person name="Ruan Y."/>
            <person name="Salzberg S.L."/>
            <person name="Sandelin A."/>
            <person name="Schneider C."/>
            <person name="Schoenbach C."/>
            <person name="Sekiguchi K."/>
            <person name="Semple C.A."/>
            <person name="Seno S."/>
            <person name="Sessa L."/>
            <person name="Sheng Y."/>
            <person name="Shibata Y."/>
            <person name="Shimada H."/>
            <person name="Shimada K."/>
            <person name="Silva D."/>
            <person name="Sinclair B."/>
            <person name="Sperling S."/>
            <person name="Stupka E."/>
            <person name="Sugiura K."/>
            <person name="Sultana R."/>
            <person name="Takenaka Y."/>
            <person name="Taki K."/>
            <person name="Tammoja K."/>
            <person name="Tan S.L."/>
            <person name="Tang S."/>
            <person name="Taylor M.S."/>
            <person name="Tegner J."/>
            <person name="Teichmann S.A."/>
            <person name="Ueda H.R."/>
            <person name="van Nimwegen E."/>
            <person name="Verardo R."/>
            <person name="Wei C.L."/>
            <person name="Yagi K."/>
            <person name="Yamanishi H."/>
            <person name="Zabarovsky E."/>
            <person name="Zhu S."/>
            <person name="Zimmer A."/>
            <person name="Hide W."/>
            <person name="Bult C."/>
            <person name="Grimmond S.M."/>
            <person name="Teasdale R.D."/>
            <person name="Liu E.T."/>
            <person name="Brusic V."/>
            <person name="Quackenbush J."/>
            <person name="Wahlestedt C."/>
            <person name="Mattick J.S."/>
            <person name="Hume D.A."/>
            <person name="Kai C."/>
            <person name="Sasaki D."/>
            <person name="Tomaru Y."/>
            <person name="Fukuda S."/>
            <person name="Kanamori-Katayama M."/>
            <person name="Suzuki M."/>
            <person name="Aoki J."/>
            <person name="Arakawa T."/>
            <person name="Iida J."/>
            <person name="Imamura K."/>
            <person name="Itoh M."/>
            <person name="Kato T."/>
            <person name="Kawaji H."/>
            <person name="Kawagashira N."/>
            <person name="Kawashima T."/>
            <person name="Kojima M."/>
            <person name="Kondo S."/>
            <person name="Konno H."/>
            <person name="Nakano K."/>
            <person name="Ninomiya N."/>
            <person name="Nishio T."/>
            <person name="Okada M."/>
            <person name="Plessy C."/>
            <person name="Shibata K."/>
            <person name="Shiraki T."/>
            <person name="Suzuki S."/>
            <person name="Tagami M."/>
            <person name="Waki K."/>
            <person name="Watahiki A."/>
            <person name="Okamura-Oho Y."/>
            <person name="Suzuki H."/>
            <person name="Kawai J."/>
            <person name="Hayashizaki Y."/>
        </authorList>
    </citation>
    <scope>NUCLEOTIDE SEQUENCE [LARGE SCALE MRNA]</scope>
    <source>
        <strain>C57BL/6J</strain>
        <tissue>Embryo</tissue>
        <tissue>Embryonic stem cell</tissue>
        <tissue>Pancreas</tissue>
    </source>
</reference>
<reference key="2">
    <citation type="journal article" date="2004" name="Genome Res.">
        <title>The status, quality, and expansion of the NIH full-length cDNA project: the Mammalian Gene Collection (MGC).</title>
        <authorList>
            <consortium name="The MGC Project Team"/>
        </authorList>
    </citation>
    <scope>NUCLEOTIDE SEQUENCE [LARGE SCALE MRNA]</scope>
    <source>
        <tissue>Heart</tissue>
        <tissue>Mammary gland</tissue>
    </source>
</reference>
<reference key="3">
    <citation type="journal article" date="2010" name="Cell">
        <title>A tissue-specific atlas of mouse protein phosphorylation and expression.</title>
        <authorList>
            <person name="Huttlin E.L."/>
            <person name="Jedrychowski M.P."/>
            <person name="Elias J.E."/>
            <person name="Goswami T."/>
            <person name="Rad R."/>
            <person name="Beausoleil S.A."/>
            <person name="Villen J."/>
            <person name="Haas W."/>
            <person name="Sowa M.E."/>
            <person name="Gygi S.P."/>
        </authorList>
    </citation>
    <scope>IDENTIFICATION BY MASS SPECTROMETRY [LARGE SCALE ANALYSIS]</scope>
    <source>
        <tissue>Brain</tissue>
        <tissue>Brown adipose tissue</tissue>
        <tissue>Heart</tissue>
        <tissue>Kidney</tissue>
        <tissue>Liver</tissue>
        <tissue>Lung</tissue>
        <tissue>Pancreas</tissue>
        <tissue>Spleen</tissue>
        <tissue>Testis</tissue>
    </source>
</reference>
<reference evidence="5 6" key="4">
    <citation type="journal article" date="2022" name="Nature">
        <title>A male germ-cell-specific ribosome controls male fertility.</title>
        <authorList>
            <person name="Li H."/>
            <person name="Huo Y."/>
            <person name="He X."/>
            <person name="Yao L."/>
            <person name="Zhang H."/>
            <person name="Cui Y."/>
            <person name="Xiao H."/>
            <person name="Xie W."/>
            <person name="Zhang D."/>
            <person name="Wang Y."/>
            <person name="Zhang S."/>
            <person name="Tu H."/>
            <person name="Cheng Y."/>
            <person name="Guo Y."/>
            <person name="Cao X."/>
            <person name="Zhu Y."/>
            <person name="Jiang T."/>
            <person name="Guo X."/>
            <person name="Qin Y."/>
            <person name="Sha J."/>
        </authorList>
    </citation>
    <scope>STRUCTURE BY ELECTRON MICROSCOPY (3.03 ANGSTROMS) OF RIBOSOME</scope>
    <scope>FUNCTION</scope>
    <scope>SUBUNIT</scope>
    <scope>SUBCELLULAR LOCATION</scope>
</reference>
<dbReference type="EMBL" id="AK007846">
    <property type="protein sequence ID" value="BAB25301.1"/>
    <property type="molecule type" value="mRNA"/>
</dbReference>
<dbReference type="EMBL" id="AK007850">
    <property type="protein sequence ID" value="BAB25304.1"/>
    <property type="molecule type" value="mRNA"/>
</dbReference>
<dbReference type="EMBL" id="AK010637">
    <property type="protein sequence ID" value="BAB27081.1"/>
    <property type="molecule type" value="mRNA"/>
</dbReference>
<dbReference type="EMBL" id="AK012488">
    <property type="protein sequence ID" value="BAB28274.1"/>
    <property type="molecule type" value="mRNA"/>
</dbReference>
<dbReference type="EMBL" id="BC027563">
    <property type="protein sequence ID" value="AAH27563.1"/>
    <property type="molecule type" value="mRNA"/>
</dbReference>
<dbReference type="EMBL" id="BC086912">
    <property type="protein sequence ID" value="AAH86912.1"/>
    <property type="molecule type" value="mRNA"/>
</dbReference>
<dbReference type="CCDS" id="CCDS38376.1"/>
<dbReference type="RefSeq" id="NP_001342445.1">
    <property type="nucleotide sequence ID" value="NM_001355516.1"/>
</dbReference>
<dbReference type="RefSeq" id="NP_001342446.1">
    <property type="nucleotide sequence ID" value="NM_001355517.1"/>
</dbReference>
<dbReference type="RefSeq" id="NP_001342447.1">
    <property type="nucleotide sequence ID" value="NM_001355518.1"/>
</dbReference>
<dbReference type="RefSeq" id="NP_001342449.1">
    <property type="nucleotide sequence ID" value="NM_001355520.1"/>
</dbReference>
<dbReference type="RefSeq" id="NP_001342450.1">
    <property type="nucleotide sequence ID" value="NM_001355521.1"/>
</dbReference>
<dbReference type="RefSeq" id="NP_079863.1">
    <property type="nucleotide sequence ID" value="NM_025587.2"/>
</dbReference>
<dbReference type="RefSeq" id="XP_006500765.1">
    <property type="nucleotide sequence ID" value="XM_006500702.2"/>
</dbReference>
<dbReference type="PDB" id="7CPU">
    <property type="method" value="EM"/>
    <property type="resolution" value="2.82 A"/>
    <property type="chains" value="SV=1-83"/>
</dbReference>
<dbReference type="PDB" id="7CPV">
    <property type="method" value="EM"/>
    <property type="resolution" value="3.03 A"/>
    <property type="chains" value="SV=1-83"/>
</dbReference>
<dbReference type="PDB" id="7LS1">
    <property type="method" value="EM"/>
    <property type="resolution" value="3.30 A"/>
    <property type="chains" value="D3=1-83"/>
</dbReference>
<dbReference type="PDB" id="7LS2">
    <property type="method" value="EM"/>
    <property type="resolution" value="3.10 A"/>
    <property type="chains" value="D3=1-83"/>
</dbReference>
<dbReference type="PDBsum" id="7CPU"/>
<dbReference type="PDBsum" id="7CPV"/>
<dbReference type="PDBsum" id="7LS1"/>
<dbReference type="PDBsum" id="7LS2"/>
<dbReference type="EMDB" id="EMD-23500"/>
<dbReference type="EMDB" id="EMD-23501"/>
<dbReference type="EMDB" id="EMD-30432"/>
<dbReference type="EMDB" id="EMD-30433"/>
<dbReference type="SMR" id="Q9CQR2"/>
<dbReference type="BioGRID" id="211505">
    <property type="interactions" value="79"/>
</dbReference>
<dbReference type="ComplexPortal" id="CPX-5261">
    <property type="entry name" value="40S cytosolic small ribosomal subunit"/>
</dbReference>
<dbReference type="FunCoup" id="Q9CQR2">
    <property type="interactions" value="1775"/>
</dbReference>
<dbReference type="STRING" id="10090.ENSMUSP00000058432"/>
<dbReference type="GlyGen" id="Q9CQR2">
    <property type="glycosylation" value="1 site, 1 O-linked glycan (1 site)"/>
</dbReference>
<dbReference type="iPTMnet" id="Q9CQR2"/>
<dbReference type="PhosphoSitePlus" id="Q9CQR2"/>
<dbReference type="SwissPalm" id="Q9CQR2"/>
<dbReference type="jPOST" id="Q9CQR2"/>
<dbReference type="PaxDb" id="10090-ENSMUSP00000058432"/>
<dbReference type="PeptideAtlas" id="Q9CQR2"/>
<dbReference type="ProteomicsDB" id="260852"/>
<dbReference type="Pumba" id="Q9CQR2"/>
<dbReference type="TopDownProteomics" id="Q9CQR2"/>
<dbReference type="Antibodypedia" id="1249">
    <property type="antibodies" value="147 antibodies from 28 providers"/>
</dbReference>
<dbReference type="DNASU" id="66481"/>
<dbReference type="Ensembl" id="ENSMUST00000059080.7">
    <property type="protein sequence ID" value="ENSMUSP00000058432.7"/>
    <property type="gene ID" value="ENSMUSG00000039001.13"/>
</dbReference>
<dbReference type="GeneID" id="66481"/>
<dbReference type="KEGG" id="mmu:66481"/>
<dbReference type="UCSC" id="uc008oiq.1">
    <property type="organism name" value="mouse"/>
</dbReference>
<dbReference type="AGR" id="MGI:1913731"/>
<dbReference type="CTD" id="6227"/>
<dbReference type="MGI" id="MGI:1913731">
    <property type="gene designation" value="Rps21"/>
</dbReference>
<dbReference type="VEuPathDB" id="HostDB:ENSMUSG00000039001"/>
<dbReference type="eggNOG" id="KOG3486">
    <property type="taxonomic scope" value="Eukaryota"/>
</dbReference>
<dbReference type="GeneTree" id="ENSGT00390000017515"/>
<dbReference type="HOGENOM" id="CLU_167122_2_0_1"/>
<dbReference type="InParanoid" id="Q9CQR2"/>
<dbReference type="OMA" id="GESDACM"/>
<dbReference type="OrthoDB" id="278325at2759"/>
<dbReference type="PhylomeDB" id="Q9CQR2"/>
<dbReference type="TreeFam" id="TF300167"/>
<dbReference type="Reactome" id="R-MMU-156827">
    <property type="pathway name" value="L13a-mediated translational silencing of Ceruloplasmin expression"/>
</dbReference>
<dbReference type="Reactome" id="R-MMU-1799339">
    <property type="pathway name" value="SRP-dependent cotranslational protein targeting to membrane"/>
</dbReference>
<dbReference type="Reactome" id="R-MMU-6791226">
    <property type="pathway name" value="Major pathway of rRNA processing in the nucleolus and cytosol"/>
</dbReference>
<dbReference type="Reactome" id="R-MMU-72649">
    <property type="pathway name" value="Translation initiation complex formation"/>
</dbReference>
<dbReference type="Reactome" id="R-MMU-72689">
    <property type="pathway name" value="Formation of a pool of free 40S subunits"/>
</dbReference>
<dbReference type="Reactome" id="R-MMU-72695">
    <property type="pathway name" value="Formation of the ternary complex, and subsequently, the 43S complex"/>
</dbReference>
<dbReference type="Reactome" id="R-MMU-72702">
    <property type="pathway name" value="Ribosomal scanning and start codon recognition"/>
</dbReference>
<dbReference type="Reactome" id="R-MMU-72706">
    <property type="pathway name" value="GTP hydrolysis and joining of the 60S ribosomal subunit"/>
</dbReference>
<dbReference type="Reactome" id="R-MMU-975956">
    <property type="pathway name" value="Nonsense Mediated Decay (NMD) independent of the Exon Junction Complex (EJC)"/>
</dbReference>
<dbReference type="Reactome" id="R-MMU-975957">
    <property type="pathway name" value="Nonsense Mediated Decay (NMD) enhanced by the Exon Junction Complex (EJC)"/>
</dbReference>
<dbReference type="BioGRID-ORCS" id="66481">
    <property type="hits" value="27 hits in 78 CRISPR screens"/>
</dbReference>
<dbReference type="ChiTaRS" id="Rps21">
    <property type="organism name" value="mouse"/>
</dbReference>
<dbReference type="PRO" id="PR:Q9CQR2"/>
<dbReference type="Proteomes" id="UP000000589">
    <property type="component" value="Chromosome 2"/>
</dbReference>
<dbReference type="RNAct" id="Q9CQR2">
    <property type="molecule type" value="protein"/>
</dbReference>
<dbReference type="Bgee" id="ENSMUSG00000039001">
    <property type="expression patterns" value="Expressed in manus and 219 other cell types or tissues"/>
</dbReference>
<dbReference type="GO" id="GO:0005737">
    <property type="term" value="C:cytoplasm"/>
    <property type="evidence" value="ECO:0000303"/>
    <property type="project" value="ComplexPortal"/>
</dbReference>
<dbReference type="GO" id="GO:0005829">
    <property type="term" value="C:cytosol"/>
    <property type="evidence" value="ECO:0000304"/>
    <property type="project" value="Reactome"/>
</dbReference>
<dbReference type="GO" id="GO:0022627">
    <property type="term" value="C:cytosolic small ribosomal subunit"/>
    <property type="evidence" value="ECO:0000314"/>
    <property type="project" value="UniProtKB"/>
</dbReference>
<dbReference type="GO" id="GO:0098794">
    <property type="term" value="C:postsynapse"/>
    <property type="evidence" value="ECO:0000303"/>
    <property type="project" value="SynGO"/>
</dbReference>
<dbReference type="GO" id="GO:0005840">
    <property type="term" value="C:ribosome"/>
    <property type="evidence" value="ECO:0000303"/>
    <property type="project" value="SynGO"/>
</dbReference>
<dbReference type="GO" id="GO:0005791">
    <property type="term" value="C:rough endoplasmic reticulum"/>
    <property type="evidence" value="ECO:0007669"/>
    <property type="project" value="UniProtKB-SubCell"/>
</dbReference>
<dbReference type="GO" id="GO:0045202">
    <property type="term" value="C:synapse"/>
    <property type="evidence" value="ECO:0000314"/>
    <property type="project" value="SynGO"/>
</dbReference>
<dbReference type="GO" id="GO:0043022">
    <property type="term" value="F:ribosome binding"/>
    <property type="evidence" value="ECO:0000250"/>
    <property type="project" value="UniProtKB"/>
</dbReference>
<dbReference type="GO" id="GO:0003735">
    <property type="term" value="F:structural constituent of ribosome"/>
    <property type="evidence" value="ECO:0000314"/>
    <property type="project" value="UniProtKB"/>
</dbReference>
<dbReference type="GO" id="GO:0002181">
    <property type="term" value="P:cytoplasmic translation"/>
    <property type="evidence" value="ECO:0000250"/>
    <property type="project" value="UniProtKB"/>
</dbReference>
<dbReference type="FunFam" id="3.30.1230.20:FF:000001">
    <property type="entry name" value="40S ribosomal protein S21"/>
    <property type="match status" value="1"/>
</dbReference>
<dbReference type="Gene3D" id="3.30.1230.20">
    <property type="match status" value="1"/>
</dbReference>
<dbReference type="InterPro" id="IPR001931">
    <property type="entry name" value="Ribosomal_eS21"/>
</dbReference>
<dbReference type="InterPro" id="IPR018279">
    <property type="entry name" value="Ribosomal_eS21_CS"/>
</dbReference>
<dbReference type="InterPro" id="IPR038579">
    <property type="entry name" value="Ribosomal_eS21_sf"/>
</dbReference>
<dbReference type="PANTHER" id="PTHR10442">
    <property type="entry name" value="40S RIBOSOMAL PROTEIN S21"/>
    <property type="match status" value="1"/>
</dbReference>
<dbReference type="Pfam" id="PF01249">
    <property type="entry name" value="Ribosomal_S21e"/>
    <property type="match status" value="1"/>
</dbReference>
<dbReference type="PIRSF" id="PIRSF002148">
    <property type="entry name" value="Ribosomal_S21e"/>
    <property type="match status" value="1"/>
</dbReference>
<dbReference type="PROSITE" id="PS00996">
    <property type="entry name" value="RIBOSOMAL_S21E"/>
    <property type="match status" value="1"/>
</dbReference>
<gene>
    <name type="primary">Rps21</name>
</gene>
<keyword id="KW-0002">3D-structure</keyword>
<keyword id="KW-0007">Acetylation</keyword>
<keyword id="KW-0963">Cytoplasm</keyword>
<keyword id="KW-0256">Endoplasmic reticulum</keyword>
<keyword id="KW-1185">Reference proteome</keyword>
<keyword id="KW-0687">Ribonucleoprotein</keyword>
<keyword id="KW-0689">Ribosomal protein</keyword>
<protein>
    <recommendedName>
        <fullName evidence="4">Small ribosomal subunit protein eS21</fullName>
    </recommendedName>
    <alternativeName>
        <fullName>40S ribosomal protein S21</fullName>
    </alternativeName>
</protein>
<comment type="function">
    <text evidence="3">Component of the small ribosomal subunit (PubMed:36517592). The ribosome is a large ribonucleoprotein complex responsible for the synthesis of proteins in the cell (PubMed:36517592).</text>
</comment>
<comment type="subunit">
    <text evidence="3">Component of the 40S small ribosomal subunit.</text>
</comment>
<comment type="subcellular location">
    <subcellularLocation>
        <location evidence="1">Cytoplasm</location>
        <location evidence="1">Cytosol</location>
    </subcellularLocation>
    <subcellularLocation>
        <location evidence="3">Cytoplasm</location>
    </subcellularLocation>
    <subcellularLocation>
        <location evidence="2">Rough endoplasmic reticulum</location>
    </subcellularLocation>
    <text evidence="1 2">Detected on cytosolic polysomes (By similarity). Detected in ribosomes that are associated with the rough endoplasmic reticulum (By similarity).</text>
</comment>
<comment type="similarity">
    <text evidence="4">Belongs to the eukaryotic ribosomal protein eS21 family.</text>
</comment>
<feature type="chain" id="PRO_0000194731" description="Small ribosomal subunit protein eS21">
    <location>
        <begin position="1"/>
        <end position="83"/>
    </location>
</feature>
<feature type="modified residue" description="N-acetylmethionine" evidence="1">
    <location>
        <position position="1"/>
    </location>
</feature>
<feature type="modified residue" description="N6-acetyllysine" evidence="1">
    <location>
        <position position="81"/>
    </location>
</feature>